<comment type="function">
    <text evidence="1">Negatively regulates TCR (T-cell antigen receptor)-mediated signaling in T-cells and BCR (B-cell antigen receptor)-mediated signaling in B-cells.</text>
</comment>
<comment type="subunit">
    <text evidence="1">When phosphorylated, interacts with GRB2, PIK3R1 and GRAP2.</text>
</comment>
<comment type="subcellular location">
    <subcellularLocation>
        <location evidence="1">Cell membrane</location>
        <topology evidence="1">Single-pass type III membrane protein</topology>
    </subcellularLocation>
</comment>
<comment type="PTM">
    <text evidence="1">Phosphorylated on tyrosines upon TCR or BCR activation; which leads to the recruitment of GRB2, PIK3R1 and GRAP2.</text>
</comment>
<proteinExistence type="evidence at transcript level"/>
<sequence>MDVTTSAWSETTRRISEPSTLQGTLGSLDKAEDHSSSIFSGFAALLAILLVVAVICVLWCCGKRKKRQVPYLRVTIMPLLTLPRPRQRAKNIYDLLPRRQEELGRHPSRSIRIVSTESLLSRNSDSPSSEHVPSRAGDALHMHRAHTHAMGYAVGIYDNAMRPQMCGNLAPSPHYVNVRASRGSPSTSSEDSRDYVNIPTAKEIAETLASASNPPRNLFILPGTKELAPSEEIDEGCGNASDCTSLGSPGTENSDPLSDGEGSSQTSNDYVNMAELDLGTPQGKQLQGMFQCRRDYENVPPGPSSNKQQEEEVTSSNTDHVEGRTDGPETHTPPAVQSGSFLALKDHVACQSSAHSETGPWEDAEETSSEDSHDYENVCAAEAGARG</sequence>
<protein>
    <recommendedName>
        <fullName>Lymphocyte transmembrane adapter 1</fullName>
    </recommendedName>
    <alternativeName>
        <fullName>Membrane-associated adapter protein LAX</fullName>
    </alternativeName>
</protein>
<organism>
    <name type="scientific">Bos taurus</name>
    <name type="common">Bovine</name>
    <dbReference type="NCBI Taxonomy" id="9913"/>
    <lineage>
        <taxon>Eukaryota</taxon>
        <taxon>Metazoa</taxon>
        <taxon>Chordata</taxon>
        <taxon>Craniata</taxon>
        <taxon>Vertebrata</taxon>
        <taxon>Euteleostomi</taxon>
        <taxon>Mammalia</taxon>
        <taxon>Eutheria</taxon>
        <taxon>Laurasiatheria</taxon>
        <taxon>Artiodactyla</taxon>
        <taxon>Ruminantia</taxon>
        <taxon>Pecora</taxon>
        <taxon>Bovidae</taxon>
        <taxon>Bovinae</taxon>
        <taxon>Bos</taxon>
    </lineage>
</organism>
<keyword id="KW-1064">Adaptive immunity</keyword>
<keyword id="KW-1003">Cell membrane</keyword>
<keyword id="KW-0391">Immunity</keyword>
<keyword id="KW-0472">Membrane</keyword>
<keyword id="KW-0597">Phosphoprotein</keyword>
<keyword id="KW-1185">Reference proteome</keyword>
<keyword id="KW-0735">Signal-anchor</keyword>
<keyword id="KW-0812">Transmembrane</keyword>
<keyword id="KW-1133">Transmembrane helix</keyword>
<dbReference type="EMBL" id="BT021859">
    <property type="protein sequence ID" value="AAX46706.1"/>
    <property type="molecule type" value="mRNA"/>
</dbReference>
<dbReference type="RefSeq" id="NP_001015674.1">
    <property type="nucleotide sequence ID" value="NM_001015674.1"/>
</dbReference>
<dbReference type="RefSeq" id="XP_059731459.1">
    <property type="nucleotide sequence ID" value="XM_059875476.1"/>
</dbReference>
<dbReference type="FunCoup" id="Q58CT8">
    <property type="interactions" value="427"/>
</dbReference>
<dbReference type="STRING" id="9913.ENSBTAP00000016385"/>
<dbReference type="PaxDb" id="9913-ENSBTAP00000016385"/>
<dbReference type="Ensembl" id="ENSBTAT00000016385.5">
    <property type="protein sequence ID" value="ENSBTAP00000016385.4"/>
    <property type="gene ID" value="ENSBTAG00000012349.6"/>
</dbReference>
<dbReference type="GeneID" id="540424"/>
<dbReference type="KEGG" id="bta:540424"/>
<dbReference type="CTD" id="54900"/>
<dbReference type="VEuPathDB" id="HostDB:ENSBTAG00000012349"/>
<dbReference type="VGNC" id="VGNC:30802">
    <property type="gene designation" value="LAX1"/>
</dbReference>
<dbReference type="eggNOG" id="ENOG502SP30">
    <property type="taxonomic scope" value="Eukaryota"/>
</dbReference>
<dbReference type="GeneTree" id="ENSGT00390000014063"/>
<dbReference type="HOGENOM" id="CLU_058345_0_0_1"/>
<dbReference type="InParanoid" id="Q58CT8"/>
<dbReference type="OMA" id="RDYINVP"/>
<dbReference type="OrthoDB" id="9449526at2759"/>
<dbReference type="TreeFam" id="TF337411"/>
<dbReference type="Proteomes" id="UP000009136">
    <property type="component" value="Chromosome 16"/>
</dbReference>
<dbReference type="Bgee" id="ENSBTAG00000012349">
    <property type="expression patterns" value="Expressed in abdominal lymph node and 83 other cell types or tissues"/>
</dbReference>
<dbReference type="GO" id="GO:0005829">
    <property type="term" value="C:cytosol"/>
    <property type="evidence" value="ECO:0007669"/>
    <property type="project" value="Ensembl"/>
</dbReference>
<dbReference type="GO" id="GO:0005794">
    <property type="term" value="C:Golgi apparatus"/>
    <property type="evidence" value="ECO:0007669"/>
    <property type="project" value="Ensembl"/>
</dbReference>
<dbReference type="GO" id="GO:0005886">
    <property type="term" value="C:plasma membrane"/>
    <property type="evidence" value="ECO:0000318"/>
    <property type="project" value="GO_Central"/>
</dbReference>
<dbReference type="GO" id="GO:0019901">
    <property type="term" value="F:protein kinase binding"/>
    <property type="evidence" value="ECO:0007669"/>
    <property type="project" value="Ensembl"/>
</dbReference>
<dbReference type="GO" id="GO:0042169">
    <property type="term" value="F:SH2 domain binding"/>
    <property type="evidence" value="ECO:0007669"/>
    <property type="project" value="Ensembl"/>
</dbReference>
<dbReference type="GO" id="GO:0002250">
    <property type="term" value="P:adaptive immune response"/>
    <property type="evidence" value="ECO:0007669"/>
    <property type="project" value="UniProtKB-KW"/>
</dbReference>
<dbReference type="GO" id="GO:0050851">
    <property type="term" value="P:antigen receptor-mediated signaling pathway"/>
    <property type="evidence" value="ECO:0000318"/>
    <property type="project" value="GO_Central"/>
</dbReference>
<dbReference type="GO" id="GO:0042113">
    <property type="term" value="P:B cell activation"/>
    <property type="evidence" value="ECO:0007669"/>
    <property type="project" value="Ensembl"/>
</dbReference>
<dbReference type="GO" id="GO:0006955">
    <property type="term" value="P:immune response"/>
    <property type="evidence" value="ECO:0000318"/>
    <property type="project" value="GO_Central"/>
</dbReference>
<dbReference type="GO" id="GO:0035556">
    <property type="term" value="P:intracellular signal transduction"/>
    <property type="evidence" value="ECO:0000318"/>
    <property type="project" value="GO_Central"/>
</dbReference>
<dbReference type="GO" id="GO:0046649">
    <property type="term" value="P:lymphocyte activation"/>
    <property type="evidence" value="ECO:0000318"/>
    <property type="project" value="GO_Central"/>
</dbReference>
<dbReference type="GO" id="GO:0043409">
    <property type="term" value="P:negative regulation of MAPK cascade"/>
    <property type="evidence" value="ECO:0007669"/>
    <property type="project" value="Ensembl"/>
</dbReference>
<dbReference type="GO" id="GO:0050868">
    <property type="term" value="P:negative regulation of T cell activation"/>
    <property type="evidence" value="ECO:0000318"/>
    <property type="project" value="GO_Central"/>
</dbReference>
<dbReference type="InterPro" id="IPR031393">
    <property type="entry name" value="LAX"/>
</dbReference>
<dbReference type="PANTHER" id="PTHR24091">
    <property type="entry name" value="LYMPHOCYTE TRANSMEMBRANE ADAPTER 1"/>
    <property type="match status" value="1"/>
</dbReference>
<dbReference type="PANTHER" id="PTHR24091:SF0">
    <property type="entry name" value="LYMPHOCYTE TRANSMEMBRANE ADAPTER 1"/>
    <property type="match status" value="1"/>
</dbReference>
<dbReference type="Pfam" id="PF15681">
    <property type="entry name" value="LAX"/>
    <property type="match status" value="1"/>
</dbReference>
<accession>Q58CT8</accession>
<reference key="1">
    <citation type="journal article" date="2005" name="BMC Genomics">
        <title>Characterization of 954 bovine full-CDS cDNA sequences.</title>
        <authorList>
            <person name="Harhay G.P."/>
            <person name="Sonstegard T.S."/>
            <person name="Keele J.W."/>
            <person name="Heaton M.P."/>
            <person name="Clawson M.L."/>
            <person name="Snelling W.M."/>
            <person name="Wiedmann R.T."/>
            <person name="Van Tassell C.P."/>
            <person name="Smith T.P.L."/>
        </authorList>
    </citation>
    <scope>NUCLEOTIDE SEQUENCE [LARGE SCALE MRNA]</scope>
</reference>
<feature type="chain" id="PRO_0000083328" description="Lymphocyte transmembrane adapter 1">
    <location>
        <begin position="1"/>
        <end position="387"/>
    </location>
</feature>
<feature type="topological domain" description="Extracellular" evidence="3">
    <location>
        <begin position="1"/>
        <end position="37"/>
    </location>
</feature>
<feature type="transmembrane region" description="Helical; Signal-anchor for type III membrane protein" evidence="3">
    <location>
        <begin position="38"/>
        <end position="58"/>
    </location>
</feature>
<feature type="topological domain" description="Cytoplasmic" evidence="3">
    <location>
        <begin position="59"/>
        <end position="387"/>
    </location>
</feature>
<feature type="region of interest" description="Disordered" evidence="4">
    <location>
        <begin position="114"/>
        <end position="136"/>
    </location>
</feature>
<feature type="region of interest" description="Disordered" evidence="4">
    <location>
        <begin position="230"/>
        <end position="268"/>
    </location>
</feature>
<feature type="region of interest" description="Disordered" evidence="4">
    <location>
        <begin position="294"/>
        <end position="387"/>
    </location>
</feature>
<feature type="compositionally biased region" description="Low complexity" evidence="4">
    <location>
        <begin position="118"/>
        <end position="129"/>
    </location>
</feature>
<feature type="compositionally biased region" description="Polar residues" evidence="4">
    <location>
        <begin position="241"/>
        <end position="268"/>
    </location>
</feature>
<feature type="compositionally biased region" description="Basic and acidic residues" evidence="4">
    <location>
        <begin position="319"/>
        <end position="329"/>
    </location>
</feature>
<feature type="compositionally biased region" description="Acidic residues" evidence="4">
    <location>
        <begin position="360"/>
        <end position="369"/>
    </location>
</feature>
<feature type="modified residue" description="Phosphotyrosine" evidence="2">
    <location>
        <position position="195"/>
    </location>
</feature>
<feature type="modified residue" description="Phosphotyrosine" evidence="2">
    <location>
        <position position="270"/>
    </location>
</feature>
<feature type="modified residue" description="Phosphotyrosine" evidence="2">
    <location>
        <position position="296"/>
    </location>
</feature>
<feature type="modified residue" description="Phosphotyrosine" evidence="2">
    <location>
        <position position="375"/>
    </location>
</feature>
<evidence type="ECO:0000250" key="1"/>
<evidence type="ECO:0000250" key="2">
    <source>
        <dbReference type="UniProtKB" id="Q8IWV1"/>
    </source>
</evidence>
<evidence type="ECO:0000255" key="3"/>
<evidence type="ECO:0000256" key="4">
    <source>
        <dbReference type="SAM" id="MobiDB-lite"/>
    </source>
</evidence>
<name>LAX1_BOVIN</name>
<gene>
    <name type="primary">LAX1</name>
    <name type="synonym">LAX</name>
</gene>